<organism>
    <name type="scientific">Neisseria meningitidis serogroup C (strain 053442)</name>
    <dbReference type="NCBI Taxonomy" id="374833"/>
    <lineage>
        <taxon>Bacteria</taxon>
        <taxon>Pseudomonadati</taxon>
        <taxon>Pseudomonadota</taxon>
        <taxon>Betaproteobacteria</taxon>
        <taxon>Neisseriales</taxon>
        <taxon>Neisseriaceae</taxon>
        <taxon>Neisseria</taxon>
    </lineage>
</organism>
<reference key="1">
    <citation type="journal article" date="2008" name="Genomics">
        <title>Characterization of ST-4821 complex, a unique Neisseria meningitidis clone.</title>
        <authorList>
            <person name="Peng J."/>
            <person name="Yang L."/>
            <person name="Yang F."/>
            <person name="Yang J."/>
            <person name="Yan Y."/>
            <person name="Nie H."/>
            <person name="Zhang X."/>
            <person name="Xiong Z."/>
            <person name="Jiang Y."/>
            <person name="Cheng F."/>
            <person name="Xu X."/>
            <person name="Chen S."/>
            <person name="Sun L."/>
            <person name="Li W."/>
            <person name="Shen Y."/>
            <person name="Shao Z."/>
            <person name="Liang X."/>
            <person name="Xu J."/>
            <person name="Jin Q."/>
        </authorList>
    </citation>
    <scope>NUCLEOTIDE SEQUENCE [LARGE SCALE GENOMIC DNA]</scope>
    <source>
        <strain>053442</strain>
    </source>
</reference>
<proteinExistence type="inferred from homology"/>
<evidence type="ECO:0000255" key="1">
    <source>
        <dbReference type="HAMAP-Rule" id="MF_00758"/>
    </source>
</evidence>
<feature type="chain" id="PRO_1000083514" description="UPF0301 protein NMCC_1249">
    <location>
        <begin position="1"/>
        <end position="182"/>
    </location>
</feature>
<comment type="similarity">
    <text evidence="1">Belongs to the UPF0301 (AlgH) family.</text>
</comment>
<protein>
    <recommendedName>
        <fullName evidence="1">UPF0301 protein NMCC_1249</fullName>
    </recommendedName>
</protein>
<sequence length="182" mass="19868">MNLSNHFLVAMPDMEDAFFSQSVVYICKHDEDGALGIAINKPSPITMDMIFSATGKNIPMRMQHDSVMMGGPVQVDRGYVVHTPIGNWQSSIGVSDNIALTSSRDVIENISREGAVDKALISIGYSSWGKGQLERELADNAWLTVPADEHILFDIPYEHRYAAAFAKLGIDPLALHGKAGHA</sequence>
<accession>A9LZR4</accession>
<gene>
    <name type="ordered locus">NMCC_1249</name>
</gene>
<dbReference type="EMBL" id="CP000381">
    <property type="protein sequence ID" value="ABX73422.1"/>
    <property type="molecule type" value="Genomic_DNA"/>
</dbReference>
<dbReference type="RefSeq" id="WP_012221747.1">
    <property type="nucleotide sequence ID" value="NC_010120.1"/>
</dbReference>
<dbReference type="SMR" id="A9LZR4"/>
<dbReference type="KEGG" id="nmn:NMCC_1249"/>
<dbReference type="HOGENOM" id="CLU_057596_1_0_4"/>
<dbReference type="Proteomes" id="UP000001177">
    <property type="component" value="Chromosome"/>
</dbReference>
<dbReference type="GO" id="GO:0005829">
    <property type="term" value="C:cytosol"/>
    <property type="evidence" value="ECO:0007669"/>
    <property type="project" value="TreeGrafter"/>
</dbReference>
<dbReference type="Gene3D" id="3.40.1740.10">
    <property type="entry name" value="VC0467-like"/>
    <property type="match status" value="1"/>
</dbReference>
<dbReference type="HAMAP" id="MF_00758">
    <property type="entry name" value="UPF0301"/>
    <property type="match status" value="1"/>
</dbReference>
<dbReference type="InterPro" id="IPR003774">
    <property type="entry name" value="AlgH-like"/>
</dbReference>
<dbReference type="NCBIfam" id="NF001266">
    <property type="entry name" value="PRK00228.1-1"/>
    <property type="match status" value="1"/>
</dbReference>
<dbReference type="PANTHER" id="PTHR30327">
    <property type="entry name" value="UNCHARACTERIZED PROTEIN YQGE"/>
    <property type="match status" value="1"/>
</dbReference>
<dbReference type="PANTHER" id="PTHR30327:SF1">
    <property type="entry name" value="UPF0301 PROTEIN YQGE"/>
    <property type="match status" value="1"/>
</dbReference>
<dbReference type="Pfam" id="PF02622">
    <property type="entry name" value="DUF179"/>
    <property type="match status" value="1"/>
</dbReference>
<dbReference type="SUPFAM" id="SSF143456">
    <property type="entry name" value="VC0467-like"/>
    <property type="match status" value="1"/>
</dbReference>
<name>Y1249_NEIM0</name>